<proteinExistence type="evidence at protein level"/>
<evidence type="ECO:0000255" key="1">
    <source>
        <dbReference type="HAMAP-Rule" id="MF_04080"/>
    </source>
</evidence>
<evidence type="ECO:0007829" key="2">
    <source>
        <dbReference type="PDB" id="1DSK"/>
    </source>
</evidence>
<evidence type="ECO:0007829" key="3">
    <source>
        <dbReference type="PDB" id="6XQI"/>
    </source>
</evidence>
<evidence type="ECO:0007829" key="4">
    <source>
        <dbReference type="PDB" id="6XQJ"/>
    </source>
</evidence>
<organismHost>
    <name type="scientific">Homo sapiens</name>
    <name type="common">Human</name>
    <dbReference type="NCBI Taxonomy" id="9606"/>
</organismHost>
<comment type="function">
    <text evidence="1">During virus replication, may deplete host UNG protein, and incude G2-M cell cycle arrest. Acts by targeting specific host proteins for degradation by the 26S proteasome, through association with the cellular CUL4A-DDB1 E3 ligase complex by direct interaction with host VPRPB/DCAF-1. Cell cycle arrest reportedly occurs within hours of infection and is not blocked by antiviral agents, suggesting that it is initiated by the VPR carried into the virion. Additionally, VPR induces apoptosis in a cell cycle dependent manner suggesting that these two effects are mechanistically linked. Detected in the serum and cerebrospinal fluid of AIDS patient, VPR may also induce cell death to bystander cells.</text>
</comment>
<comment type="function">
    <text evidence="1">During virus entry, plays a role in the transport of the viral pre-integration (PIC) complex to the host nucleus. This function is crucial for viral infection of non-dividing macrophages. May act directly at the nuclear pore complex, by binding nucleoporins phenylalanine-glycine (FG)-repeat regions.</text>
</comment>
<comment type="subunit">
    <text evidence="1">Homooligomer, may form homodimer. Interacts with p6-gag region of the Pr55 Gag precursor protein through a (Leu-X-X)4 motif near the C-terminus of the P6gag protein. Interacts with host UNG. May interact with host RAD23A/HHR23A. Interacts with host VPRBP/DCAF1, leading to hijack the CUL4A-RBX1-DDB1-DCAF1/VPRBP complex, mediating ubiquitination of host proteins such as TERT and ZGPAT and arrest of the cell cycle in G2 phase.</text>
</comment>
<comment type="interaction">
    <interactant intactId="EBI-6164519">
        <id>P12520</id>
    </interactant>
    <interactant intactId="EBI-1104799">
        <id>Q5SW79</id>
        <label>CEP170</label>
    </interactant>
    <organismsDiffer>true</organismsDiffer>
    <experiments>4</experiments>
</comment>
<comment type="interaction">
    <interactant intactId="EBI-6164519">
        <id>P12520</id>
    </interactant>
    <interactant intactId="EBI-1996353">
        <id>Q9Y4B6</id>
        <label>DCAF1</label>
    </interactant>
    <organismsDiffer>true</organismsDiffer>
    <experiments>5</experiments>
</comment>
<comment type="interaction">
    <interactant intactId="EBI-6164519">
        <id>P12520</id>
    </interactant>
    <interactant intactId="EBI-740686">
        <id>Q5TAQ9</id>
        <label>DCAF8</label>
    </interactant>
    <organismsDiffer>true</organismsDiffer>
    <experiments>2</experiments>
</comment>
<comment type="interaction">
    <interactant intactId="EBI-6164519">
        <id>P12520</id>
    </interactant>
    <interactant intactId="EBI-752301">
        <id>Q8WXD5</id>
        <label>GEMIN6</label>
    </interactant>
    <organismsDiffer>true</organismsDiffer>
    <experiments>3</experiments>
</comment>
<comment type="interaction">
    <interactant intactId="EBI-6164519">
        <id>P12520</id>
    </interactant>
    <interactant intactId="EBI-2465479">
        <id>Q9H4A6</id>
        <label>GOLPH3</label>
    </interactant>
    <organismsDiffer>true</organismsDiffer>
    <experiments>3</experiments>
</comment>
<comment type="interaction">
    <interactant intactId="EBI-6164519">
        <id>P12520</id>
    </interactant>
    <interactant intactId="EBI-2339359">
        <id>O14929</id>
        <label>HAT1</label>
    </interactant>
    <organismsDiffer>true</organismsDiffer>
    <experiments>3</experiments>
</comment>
<comment type="interaction">
    <interactant intactId="EBI-6164519">
        <id>P12520</id>
    </interactant>
    <interactant intactId="EBI-5357290">
        <id>O75386</id>
        <label>TULP3</label>
    </interactant>
    <organismsDiffer>true</organismsDiffer>
    <experiments>2</experiments>
</comment>
<comment type="subcellular location">
    <subcellularLocation>
        <location evidence="1">Virion</location>
    </subcellularLocation>
    <subcellularLocation>
        <location evidence="1">Host nucleus</location>
    </subcellularLocation>
    <subcellularLocation>
        <location evidence="1">Host extracellular space</location>
    </subcellularLocation>
    <text evidence="1">Incorporation into virion is dependent on p6 GAG sequences. Lacks a canonical nuclear localization signal, thus import into nucleus may function independently of the human importin pathway. Detected in high quantity in the serum and cerebrospinal fluid of AIDS patient.</text>
</comment>
<comment type="PTM">
    <text evidence="1">Phosphorylated on several residues by host. These phosphorylations regulate VPR activity for the nuclear import of the HIV-1 pre-integration complex.</text>
</comment>
<comment type="miscellaneous">
    <text evidence="1">HIV-1 lineages are divided in three main groups, M (for Major), O (for Outlier), and N (for New, or Non-M, Non-O). The vast majority of strains found worldwide belong to the group M. Group O seems to be endemic to and largely confined to Cameroon and neighboring countries in West Central Africa, where these viruses represent a small minority of HIV-1 strains. The group N is represented by a limited number of isolates from Cameroonian persons. The group M is further subdivided in 9 clades or subtypes (A to D, F to H, J and K).</text>
</comment>
<comment type="similarity">
    <text evidence="1">Belongs to the HIV-1 VPR protein family.</text>
</comment>
<gene>
    <name evidence="1" type="primary">vpr</name>
</gene>
<organism>
    <name type="scientific">Human immunodeficiency virus type 1 group M subtype B (isolate NY5)</name>
    <name type="common">HIV-1</name>
    <dbReference type="NCBI Taxonomy" id="11698"/>
    <lineage>
        <taxon>Viruses</taxon>
        <taxon>Riboviria</taxon>
        <taxon>Pararnavirae</taxon>
        <taxon>Artverviricota</taxon>
        <taxon>Revtraviricetes</taxon>
        <taxon>Ortervirales</taxon>
        <taxon>Retroviridae</taxon>
        <taxon>Orthoretrovirinae</taxon>
        <taxon>Lentivirus</taxon>
        <taxon>Human immunodeficiency virus type 1</taxon>
    </lineage>
</organism>
<dbReference type="EMBL" id="M19921">
    <property type="protein sequence ID" value="AAA44990.1"/>
    <property type="molecule type" value="Genomic_RNA"/>
</dbReference>
<dbReference type="PDB" id="1BDE">
    <property type="method" value="NMR"/>
    <property type="chains" value="A=50-82"/>
</dbReference>
<dbReference type="PDB" id="1DSJ">
    <property type="method" value="NMR"/>
    <property type="chains" value="A=50-75"/>
</dbReference>
<dbReference type="PDB" id="1DSK">
    <property type="method" value="NMR"/>
    <property type="chains" value="A=59-86"/>
</dbReference>
<dbReference type="PDB" id="1KZS">
    <property type="method" value="NMR"/>
    <property type="chains" value="A=34-51"/>
</dbReference>
<dbReference type="PDB" id="1KZT">
    <property type="method" value="NMR"/>
    <property type="chains" value="A=34-51"/>
</dbReference>
<dbReference type="PDB" id="1KZV">
    <property type="method" value="NMR"/>
    <property type="chains" value="A=34-51"/>
</dbReference>
<dbReference type="PDB" id="5JK7">
    <property type="method" value="X-ray"/>
    <property type="resolution" value="3.49 A"/>
    <property type="chains" value="F/H=1-96"/>
</dbReference>
<dbReference type="PDB" id="6XQI">
    <property type="method" value="X-ray"/>
    <property type="resolution" value="2.34 A"/>
    <property type="chains" value="A/B/C/D=16-78"/>
</dbReference>
<dbReference type="PDB" id="6XQJ">
    <property type="method" value="NMR"/>
    <property type="chains" value="A=1-79"/>
</dbReference>
<dbReference type="PDB" id="7V7C">
    <property type="method" value="EM"/>
    <property type="resolution" value="3.70 A"/>
    <property type="chains" value="C/G=1-96"/>
</dbReference>
<dbReference type="PDBsum" id="1BDE"/>
<dbReference type="PDBsum" id="1DSJ"/>
<dbReference type="PDBsum" id="1DSK"/>
<dbReference type="PDBsum" id="1KZS"/>
<dbReference type="PDBsum" id="1KZT"/>
<dbReference type="PDBsum" id="1KZV"/>
<dbReference type="PDBsum" id="5JK7"/>
<dbReference type="PDBsum" id="6XQI"/>
<dbReference type="PDBsum" id="6XQJ"/>
<dbReference type="PDBsum" id="7V7C"/>
<dbReference type="BMRB" id="P12520"/>
<dbReference type="SMR" id="P12520"/>
<dbReference type="IntAct" id="P12520">
    <property type="interactions" value="47"/>
</dbReference>
<dbReference type="TCDB" id="1.A.42.1.1">
    <property type="family name" value="the hiv viral protein r (vpr) family"/>
</dbReference>
<dbReference type="EvolutionaryTrace" id="P12520"/>
<dbReference type="GO" id="GO:0043657">
    <property type="term" value="C:host cell"/>
    <property type="evidence" value="ECO:0007669"/>
    <property type="project" value="GOC"/>
</dbReference>
<dbReference type="GO" id="GO:0042025">
    <property type="term" value="C:host cell nucleus"/>
    <property type="evidence" value="ECO:0007669"/>
    <property type="project" value="UniProtKB-SubCell"/>
</dbReference>
<dbReference type="GO" id="GO:0043655">
    <property type="term" value="C:host extracellular space"/>
    <property type="evidence" value="ECO:0007669"/>
    <property type="project" value="UniProtKB-SubCell"/>
</dbReference>
<dbReference type="GO" id="GO:0044423">
    <property type="term" value="C:virion component"/>
    <property type="evidence" value="ECO:0007669"/>
    <property type="project" value="UniProtKB-UniRule"/>
</dbReference>
<dbReference type="GO" id="GO:0006351">
    <property type="term" value="P:DNA-templated transcription"/>
    <property type="evidence" value="ECO:0007669"/>
    <property type="project" value="UniProtKB-UniRule"/>
</dbReference>
<dbReference type="GO" id="GO:0034220">
    <property type="term" value="P:monoatomic ion transmembrane transport"/>
    <property type="evidence" value="ECO:0007669"/>
    <property type="project" value="UniProtKB-KW"/>
</dbReference>
<dbReference type="GO" id="GO:0051260">
    <property type="term" value="P:protein homooligomerization"/>
    <property type="evidence" value="ECO:0007669"/>
    <property type="project" value="UniProtKB-UniRule"/>
</dbReference>
<dbReference type="GO" id="GO:0006355">
    <property type="term" value="P:regulation of DNA-templated transcription"/>
    <property type="evidence" value="ECO:0007669"/>
    <property type="project" value="UniProtKB-UniRule"/>
</dbReference>
<dbReference type="GO" id="GO:0046718">
    <property type="term" value="P:symbiont entry into host cell"/>
    <property type="evidence" value="ECO:0007669"/>
    <property type="project" value="UniProtKB-KW"/>
</dbReference>
<dbReference type="GO" id="GO:0052151">
    <property type="term" value="P:symbiont-mediated activation of host apoptosis"/>
    <property type="evidence" value="ECO:0007669"/>
    <property type="project" value="UniProtKB-UniRule"/>
</dbReference>
<dbReference type="GO" id="GO:0039592">
    <property type="term" value="P:symbiont-mediated arrest of host cell cycle during G2/M transition"/>
    <property type="evidence" value="ECO:0007669"/>
    <property type="project" value="UniProtKB-UniRule"/>
</dbReference>
<dbReference type="GO" id="GO:0075732">
    <property type="term" value="P:viral penetration into host nucleus"/>
    <property type="evidence" value="ECO:0007669"/>
    <property type="project" value="UniProtKB-UniRule"/>
</dbReference>
<dbReference type="FunFam" id="1.20.5.90:FF:000001">
    <property type="entry name" value="Protein Vpr"/>
    <property type="match status" value="1"/>
</dbReference>
<dbReference type="Gene3D" id="6.10.210.10">
    <property type="match status" value="1"/>
</dbReference>
<dbReference type="Gene3D" id="1.20.5.90">
    <property type="entry name" value="VpR/VpX protein, C-terminal domain"/>
    <property type="match status" value="1"/>
</dbReference>
<dbReference type="HAMAP" id="MF_04080">
    <property type="entry name" value="HIV_VPR"/>
    <property type="match status" value="1"/>
</dbReference>
<dbReference type="InterPro" id="IPR000012">
    <property type="entry name" value="RetroV_VpR/X"/>
</dbReference>
<dbReference type="Pfam" id="PF00522">
    <property type="entry name" value="VPR"/>
    <property type="match status" value="1"/>
</dbReference>
<dbReference type="PRINTS" id="PR00444">
    <property type="entry name" value="HIVVPRVPX"/>
</dbReference>
<protein>
    <recommendedName>
        <fullName evidence="1">Protein Vpr</fullName>
    </recommendedName>
    <alternativeName>
        <fullName evidence="1">R ORF protein</fullName>
    </alternativeName>
    <alternativeName>
        <fullName evidence="1">Viral protein R</fullName>
    </alternativeName>
</protein>
<reference key="1">
    <citation type="submission" date="1988-06" db="EMBL/GenBank/DDBJ databases">
        <authorList>
            <person name="Buckler C.E."/>
            <person name="Buckler-White A.J."/>
            <person name="Willey R.L."/>
            <person name="McCoy J."/>
        </authorList>
    </citation>
    <scope>NUCLEOTIDE SEQUENCE [GENOMIC RNA]</scope>
</reference>
<reference key="2">
    <citation type="journal article" date="1996" name="Proc. Natl. Acad. Sci. U.S.A.">
        <title>Vpr protein of human immunodeficiency virus type 1 forms cation-selective channels in planar lipid bilayers.</title>
        <authorList>
            <person name="Piller S.C."/>
            <person name="Ewart G.D."/>
            <person name="Premkumar A."/>
            <person name="Cox G.B."/>
            <person name="Gage P.W."/>
        </authorList>
    </citation>
    <scope>STRUCTURE BY NMR OF 50-75</scope>
</reference>
<reference key="3">
    <citation type="journal article" date="1996" name="Gene">
        <title>Characterization of a leucine-zipper-like domain in Vpr protein of human immunodeficiency virus type 1.</title>
        <authorList>
            <person name="Wang L."/>
            <person name="Mukherjee S."/>
            <person name="Narayan O."/>
            <person name="Zhao L.J."/>
        </authorList>
    </citation>
    <scope>STRUCTURE BY NMR OF 59-86</scope>
</reference>
<reference key="4">
    <citation type="journal article" date="1998" name="J. Pept. Sci.">
        <title>Solution structure of peptides from HIV-1 Vpr protein that cause membrane permeabilization and growth arrest.</title>
        <authorList>
            <person name="Yao S."/>
            <person name="Torres A.M."/>
            <person name="Azad A.A."/>
            <person name="Macreadie I.G."/>
            <person name="Norton R.S."/>
        </authorList>
    </citation>
    <scope>STRUCTURE BY NMR OF 50-82</scope>
</reference>
<reference key="5">
    <citation type="journal article" date="2002" name="Eur. J. Biochem.">
        <title>Structure of human immunodeficiency virus type 1 Vpr(34-51) peptide in micelle containing aqueous solution.</title>
        <authorList>
            <person name="Engler A."/>
            <person name="Stangler T."/>
            <person name="Willbold D."/>
        </authorList>
    </citation>
    <scope>STRUCTURE BY NMR OF 34-51</scope>
</reference>
<sequence>MEQAPEDQGPQREPYNEWTLELLEELKSEAVRHFPRIWLHNLGQHIYETYGDTWAGVEAIIRILQQLLFIHFRIGCRHSRIGVTRQRRARNGASRS</sequence>
<feature type="chain" id="PRO_0000085446" description="Protein Vpr">
    <location>
        <begin position="1"/>
        <end position="96"/>
    </location>
</feature>
<feature type="region of interest" description="Homooligomerization" evidence="1">
    <location>
        <begin position="1"/>
        <end position="42"/>
    </location>
</feature>
<feature type="modified residue" description="Phosphoserine; by host" evidence="1">
    <location>
        <position position="79"/>
    </location>
</feature>
<feature type="modified residue" description="Phosphoserine; by host" evidence="1">
    <location>
        <position position="94"/>
    </location>
</feature>
<feature type="modified residue" description="Phosphoserine; by host" evidence="1">
    <location>
        <position position="96"/>
    </location>
</feature>
<feature type="turn" evidence="4">
    <location>
        <begin position="14"/>
        <end position="17"/>
    </location>
</feature>
<feature type="helix" evidence="3">
    <location>
        <begin position="18"/>
        <end position="33"/>
    </location>
</feature>
<feature type="helix" evidence="3">
    <location>
        <begin position="36"/>
        <end position="50"/>
    </location>
</feature>
<feature type="helix" evidence="3">
    <location>
        <begin position="54"/>
        <end position="74"/>
    </location>
</feature>
<feature type="turn" evidence="2">
    <location>
        <begin position="77"/>
        <end position="80"/>
    </location>
</feature>
<feature type="helix" evidence="2">
    <location>
        <begin position="81"/>
        <end position="83"/>
    </location>
</feature>
<keyword id="KW-0002">3D-structure</keyword>
<keyword id="KW-0010">Activator</keyword>
<keyword id="KW-0014">AIDS</keyword>
<keyword id="KW-0053">Apoptosis</keyword>
<keyword id="KW-0131">Cell cycle</keyword>
<keyword id="KW-1079">Host G2/M cell cycle arrest by virus</keyword>
<keyword id="KW-1048">Host nucleus</keyword>
<keyword id="KW-0945">Host-virus interaction</keyword>
<keyword id="KW-0407">Ion channel</keyword>
<keyword id="KW-0406">Ion transport</keyword>
<keyword id="KW-1121">Modulation of host cell cycle by virus</keyword>
<keyword id="KW-0597">Phosphoprotein</keyword>
<keyword id="KW-0804">Transcription</keyword>
<keyword id="KW-0805">Transcription regulation</keyword>
<keyword id="KW-0813">Transport</keyword>
<keyword id="KW-1163">Viral penetration into host nucleus</keyword>
<keyword id="KW-0946">Virion</keyword>
<keyword id="KW-1160">Virus entry into host cell</keyword>
<accession>P12520</accession>
<name>VPR_HV1N5</name>